<accession>Q03054</accession>
<reference key="1">
    <citation type="journal article" date="1993" name="Nucleic Acids Res.">
        <title>Protein NS26 is highly conserved among porcine rotavirus strains.</title>
        <authorList>
            <person name="Lopez S."/>
            <person name="Arias C.F."/>
        </authorList>
    </citation>
    <scope>NUCLEOTIDE SEQUENCE [GENOMIC RNA]</scope>
</reference>
<reference key="2">
    <citation type="journal article" date="2000" name="J. Gen. Virol.">
        <title>The C-terminal domain of rotavirus NSP5 is essential for its multimerization, hyperphosphorylation and interaction with NSP6.</title>
        <authorList>
            <person name="Torres-Vega M.A."/>
            <person name="Gonzalez R.A."/>
            <person name="Duarte M."/>
            <person name="Poncet D."/>
            <person name="Lopez S."/>
            <person name="Arias C.F."/>
        </authorList>
    </citation>
    <scope>SUBUNIT</scope>
    <scope>PHOSPHORYLATION</scope>
    <scope>INTERACTION WITH NSP6</scope>
</reference>
<protein>
    <recommendedName>
        <fullName evidence="1">Non-structural protein 5</fullName>
        <shortName evidence="1">NSP5</shortName>
    </recommendedName>
    <alternativeName>
        <fullName evidence="1">NS26</fullName>
    </alternativeName>
</protein>
<feature type="chain" id="PRO_0000149639" description="Non-structural protein 5">
    <location>
        <begin position="1"/>
        <end position="197"/>
    </location>
</feature>
<feature type="region of interest" description="Disordered" evidence="2">
    <location>
        <begin position="17"/>
        <end position="37"/>
    </location>
</feature>
<feature type="region of interest" description="Disordered" evidence="2">
    <location>
        <begin position="53"/>
        <end position="72"/>
    </location>
</feature>
<feature type="region of interest" description="Disordered" evidence="2">
    <location>
        <begin position="129"/>
        <end position="166"/>
    </location>
</feature>
<feature type="region of interest" description="Homodimerization and interaction with NSP6" evidence="3">
    <location>
        <begin position="188"/>
        <end position="197"/>
    </location>
</feature>
<feature type="compositionally biased region" description="Low complexity" evidence="2">
    <location>
        <begin position="17"/>
        <end position="30"/>
    </location>
</feature>
<feature type="compositionally biased region" description="Acidic residues" evidence="2">
    <location>
        <begin position="152"/>
        <end position="165"/>
    </location>
</feature>
<feature type="binding site" evidence="1">
    <location>
        <position position="92"/>
    </location>
    <ligand>
        <name>Mg(2+)</name>
        <dbReference type="ChEBI" id="CHEBI:18420"/>
    </ligand>
</feature>
<feature type="modified residue" description="Phosphoserine; by host CK1" evidence="1">
    <location>
        <position position="67"/>
    </location>
</feature>
<feature type="modified residue" description="Phosphoserine; by host" evidence="1">
    <location>
        <position position="153"/>
    </location>
</feature>
<feature type="modified residue" description="Phosphoserine; by host" evidence="1">
    <location>
        <position position="155"/>
    </location>
</feature>
<feature type="modified residue" description="Phosphoserine; by host" evidence="1">
    <location>
        <position position="163"/>
    </location>
</feature>
<feature type="modified residue" description="Phosphoserine; by host" evidence="1">
    <location>
        <position position="165"/>
    </location>
</feature>
<proteinExistence type="evidence at protein level"/>
<evidence type="ECO:0000255" key="1">
    <source>
        <dbReference type="HAMAP-Rule" id="MF_04092"/>
    </source>
</evidence>
<evidence type="ECO:0000256" key="2">
    <source>
        <dbReference type="SAM" id="MobiDB-lite"/>
    </source>
</evidence>
<evidence type="ECO:0000269" key="3">
    <source>
    </source>
</evidence>
<comment type="function">
    <text evidence="1">Plays an essential role in the viral genome replication. Participates, together with NSP2, in the formation of viral factories (viroplasms), which are large inclusions in the host cytoplasm where replication intermediates are assembled and viral RNA replication takes place. Orchestrates the recruitment of viroplasmic proteins such as capsid proteins to these factories. Participates in the selective exclusion of host proteins from stress granules (SG) and P bodies (PB). Also participates in the sequestration of these remodeled organelles in viral factories.</text>
</comment>
<comment type="cofactor">
    <text>Magnesium is required for ATPase activity.</text>
</comment>
<comment type="cofactor">
    <cofactor evidence="1">
        <name>Mg(2+)</name>
        <dbReference type="ChEBI" id="CHEBI:18420"/>
    </cofactor>
</comment>
<comment type="subunit">
    <text evidence="1">Homodimer. Interacts with VP1. Interacts with VP2. Interacts with NSP2; this interaction leads to up-regulation of NSP5 hyperphosphorylation and formation of virus factories. Interacts with NSP6. Participates in the selective exclusion of host proteins from stress granules (SG) and P bodies (PB). Also participates in the sequestration of these remodeled organelles in viral factories.</text>
</comment>
<comment type="subcellular location">
    <subcellularLocation>
        <location evidence="1">Host cytoplasm</location>
    </subcellularLocation>
    <text evidence="1">Found in spherical cytoplasmic structures, called virus factories, that appear early after infection and are the site of viral replication and packaging.</text>
</comment>
<comment type="PTM">
    <text evidence="1">O-glycosylated.</text>
</comment>
<comment type="PTM">
    <text evidence="1 3">Hyperphosphorylated on serine residues, when in dimeric form. Phosphorylation by host CK1 is required for the hyperphosphorylation of NSP5 dimer.</text>
</comment>
<comment type="similarity">
    <text evidence="1">Belongs to the rotavirus NSP5 family.</text>
</comment>
<sequence length="197" mass="21560">MSLSIDVTSLPSISSSIFKNESSSTTSTLSGKSIGRSEQYISPDAEAFNKYMLSKSPEDIGPSDSASNDPLTSFSIRSNAVKTNADAGVSMDSSTQSRPSSNVGCDQVDFSLTKGINVSANLDSCISISTDHKKEKSKKDKSRKHYPRIEADSDSEDYVLDDSDSDDGKCKNCKYKKKYFALRMRMKQVAMQLIEDL</sequence>
<name>NSP5_ROTPY</name>
<organismHost>
    <name type="scientific">Sus scrofa</name>
    <name type="common">Pig</name>
    <dbReference type="NCBI Taxonomy" id="9823"/>
</organismHost>
<keyword id="KW-0325">Glycoprotein</keyword>
<keyword id="KW-1035">Host cytoplasm</keyword>
<keyword id="KW-0460">Magnesium</keyword>
<keyword id="KW-0479">Metal-binding</keyword>
<keyword id="KW-0547">Nucleotide-binding</keyword>
<keyword id="KW-0597">Phosphoprotein</keyword>
<keyword id="KW-0694">RNA-binding</keyword>
<organism>
    <name type="scientific">Rotavirus A (strain RVA/Pig/Mexico/YM/1983/G11P9[7])</name>
    <name type="common">RV-A</name>
    <dbReference type="NCBI Taxonomy" id="10919"/>
    <lineage>
        <taxon>Viruses</taxon>
        <taxon>Riboviria</taxon>
        <taxon>Orthornavirae</taxon>
        <taxon>Duplornaviricota</taxon>
        <taxon>Resentoviricetes</taxon>
        <taxon>Reovirales</taxon>
        <taxon>Sedoreoviridae</taxon>
        <taxon>Rotavirus</taxon>
        <taxon>Rotavirus A</taxon>
    </lineage>
</organism>
<dbReference type="EMBL" id="X69486">
    <property type="protein sequence ID" value="CAA49241.1"/>
    <property type="molecule type" value="Genomic_RNA"/>
</dbReference>
<dbReference type="SMR" id="Q03054"/>
<dbReference type="GO" id="GO:0030430">
    <property type="term" value="C:host cell cytoplasm"/>
    <property type="evidence" value="ECO:0007669"/>
    <property type="project" value="UniProtKB-SubCell"/>
</dbReference>
<dbReference type="GO" id="GO:0016887">
    <property type="term" value="F:ATP hydrolysis activity"/>
    <property type="evidence" value="ECO:0007669"/>
    <property type="project" value="UniProtKB-UniRule"/>
</dbReference>
<dbReference type="GO" id="GO:0000287">
    <property type="term" value="F:magnesium ion binding"/>
    <property type="evidence" value="ECO:0007669"/>
    <property type="project" value="UniProtKB-UniRule"/>
</dbReference>
<dbReference type="GO" id="GO:0000166">
    <property type="term" value="F:nucleotide binding"/>
    <property type="evidence" value="ECO:0007669"/>
    <property type="project" value="UniProtKB-UniRule"/>
</dbReference>
<dbReference type="GO" id="GO:0003723">
    <property type="term" value="F:RNA binding"/>
    <property type="evidence" value="ECO:0007669"/>
    <property type="project" value="UniProtKB-UniRule"/>
</dbReference>
<dbReference type="GO" id="GO:0019079">
    <property type="term" value="P:viral genome replication"/>
    <property type="evidence" value="ECO:0007669"/>
    <property type="project" value="UniProtKB-UniRule"/>
</dbReference>
<dbReference type="HAMAP" id="MF_04092">
    <property type="entry name" value="ROTA_NSP5"/>
    <property type="match status" value="1"/>
</dbReference>
<dbReference type="InterPro" id="IPR002512">
    <property type="entry name" value="Rotavirus_A/C_NSP5"/>
</dbReference>
<dbReference type="Pfam" id="PF01525">
    <property type="entry name" value="Rota_NS26"/>
    <property type="match status" value="2"/>
</dbReference>
<dbReference type="PIRSF" id="PIRSF004006">
    <property type="entry name" value="Rota_NS26"/>
    <property type="match status" value="1"/>
</dbReference>